<sequence length="293" mass="32063">MPWIQLTLSCSEEHAPQVGDMLMANGAQAVTYRDGADTPIFEPRPGDVILWEHTLATGLFDADADIKAIIANLKQSNIFGSDLQYKVDALEDKDWEREWMDNFHPIQFGENLWICPSWREIPKPEAVNILLDPGMAFGTGTHPTTAMCLRWIDANPPTGKTVVDFGCGSGILGIAALLFKAEHVVGIDIDQQALIATKDNAERNKVGDKFSLYLPSQQPETQVDLVLANVLAGPLRELADTILGFVSPGGQLVLSGILERQIEGVIEAYQPHIKFDTPTIDGDWAMLSGTRVG</sequence>
<protein>
    <recommendedName>
        <fullName evidence="1">Ribosomal protein L11 methyltransferase</fullName>
        <shortName evidence="1">L11 Mtase</shortName>
        <ecNumber evidence="1">2.1.1.-</ecNumber>
    </recommendedName>
</protein>
<accession>Q5QVT9</accession>
<reference key="1">
    <citation type="journal article" date="2004" name="Proc. Natl. Acad. Sci. U.S.A.">
        <title>Genome sequence of the deep-sea gamma-proteobacterium Idiomarina loihiensis reveals amino acid fermentation as a source of carbon and energy.</title>
        <authorList>
            <person name="Hou S."/>
            <person name="Saw J.H."/>
            <person name="Lee K.S."/>
            <person name="Freitas T.A."/>
            <person name="Belisle C."/>
            <person name="Kawarabayasi Y."/>
            <person name="Donachie S.P."/>
            <person name="Pikina A."/>
            <person name="Galperin M.Y."/>
            <person name="Koonin E.V."/>
            <person name="Makarova K.S."/>
            <person name="Omelchenko M.V."/>
            <person name="Sorokin A."/>
            <person name="Wolf Y.I."/>
            <person name="Li Q.X."/>
            <person name="Keum Y.S."/>
            <person name="Campbell S."/>
            <person name="Denery J."/>
            <person name="Aizawa S."/>
            <person name="Shibata S."/>
            <person name="Malahoff A."/>
            <person name="Alam M."/>
        </authorList>
    </citation>
    <scope>NUCLEOTIDE SEQUENCE [LARGE SCALE GENOMIC DNA]</scope>
    <source>
        <strain>ATCC BAA-735 / DSM 15497 / L2-TR</strain>
    </source>
</reference>
<feature type="chain" id="PRO_1000046033" description="Ribosomal protein L11 methyltransferase">
    <location>
        <begin position="1"/>
        <end position="293"/>
    </location>
</feature>
<feature type="binding site" evidence="1">
    <location>
        <position position="145"/>
    </location>
    <ligand>
        <name>S-adenosyl-L-methionine</name>
        <dbReference type="ChEBI" id="CHEBI:59789"/>
    </ligand>
</feature>
<feature type="binding site" evidence="1">
    <location>
        <position position="166"/>
    </location>
    <ligand>
        <name>S-adenosyl-L-methionine</name>
        <dbReference type="ChEBI" id="CHEBI:59789"/>
    </ligand>
</feature>
<feature type="binding site" evidence="1">
    <location>
        <position position="188"/>
    </location>
    <ligand>
        <name>S-adenosyl-L-methionine</name>
        <dbReference type="ChEBI" id="CHEBI:59789"/>
    </ligand>
</feature>
<feature type="binding site" evidence="1">
    <location>
        <position position="229"/>
    </location>
    <ligand>
        <name>S-adenosyl-L-methionine</name>
        <dbReference type="ChEBI" id="CHEBI:59789"/>
    </ligand>
</feature>
<evidence type="ECO:0000255" key="1">
    <source>
        <dbReference type="HAMAP-Rule" id="MF_00735"/>
    </source>
</evidence>
<gene>
    <name evidence="1" type="primary">prmA</name>
    <name type="ordered locus">IL2287</name>
</gene>
<name>PRMA_IDILO</name>
<organism>
    <name type="scientific">Idiomarina loihiensis (strain ATCC BAA-735 / DSM 15497 / L2-TR)</name>
    <dbReference type="NCBI Taxonomy" id="283942"/>
    <lineage>
        <taxon>Bacteria</taxon>
        <taxon>Pseudomonadati</taxon>
        <taxon>Pseudomonadota</taxon>
        <taxon>Gammaproteobacteria</taxon>
        <taxon>Alteromonadales</taxon>
        <taxon>Idiomarinaceae</taxon>
        <taxon>Idiomarina</taxon>
    </lineage>
</organism>
<proteinExistence type="inferred from homology"/>
<dbReference type="EC" id="2.1.1.-" evidence="1"/>
<dbReference type="EMBL" id="AE017340">
    <property type="protein sequence ID" value="AAV83119.1"/>
    <property type="molecule type" value="Genomic_DNA"/>
</dbReference>
<dbReference type="RefSeq" id="WP_011235513.1">
    <property type="nucleotide sequence ID" value="NC_006512.1"/>
</dbReference>
<dbReference type="SMR" id="Q5QVT9"/>
<dbReference type="STRING" id="283942.IL2287"/>
<dbReference type="GeneID" id="41337481"/>
<dbReference type="KEGG" id="ilo:IL2287"/>
<dbReference type="eggNOG" id="COG2264">
    <property type="taxonomic scope" value="Bacteria"/>
</dbReference>
<dbReference type="HOGENOM" id="CLU_049382_4_1_6"/>
<dbReference type="OrthoDB" id="9785995at2"/>
<dbReference type="Proteomes" id="UP000001171">
    <property type="component" value="Chromosome"/>
</dbReference>
<dbReference type="GO" id="GO:0005829">
    <property type="term" value="C:cytosol"/>
    <property type="evidence" value="ECO:0007669"/>
    <property type="project" value="TreeGrafter"/>
</dbReference>
<dbReference type="GO" id="GO:0016279">
    <property type="term" value="F:protein-lysine N-methyltransferase activity"/>
    <property type="evidence" value="ECO:0007669"/>
    <property type="project" value="TreeGrafter"/>
</dbReference>
<dbReference type="GO" id="GO:0032259">
    <property type="term" value="P:methylation"/>
    <property type="evidence" value="ECO:0007669"/>
    <property type="project" value="UniProtKB-KW"/>
</dbReference>
<dbReference type="CDD" id="cd02440">
    <property type="entry name" value="AdoMet_MTases"/>
    <property type="match status" value="1"/>
</dbReference>
<dbReference type="Gene3D" id="3.40.50.150">
    <property type="entry name" value="Vaccinia Virus protein VP39"/>
    <property type="match status" value="1"/>
</dbReference>
<dbReference type="HAMAP" id="MF_00735">
    <property type="entry name" value="Methyltr_PrmA"/>
    <property type="match status" value="1"/>
</dbReference>
<dbReference type="InterPro" id="IPR050078">
    <property type="entry name" value="Ribosomal_L11_MeTrfase_PrmA"/>
</dbReference>
<dbReference type="InterPro" id="IPR004498">
    <property type="entry name" value="Ribosomal_PrmA_MeTrfase"/>
</dbReference>
<dbReference type="InterPro" id="IPR029063">
    <property type="entry name" value="SAM-dependent_MTases_sf"/>
</dbReference>
<dbReference type="NCBIfam" id="TIGR00406">
    <property type="entry name" value="prmA"/>
    <property type="match status" value="1"/>
</dbReference>
<dbReference type="PANTHER" id="PTHR43648">
    <property type="entry name" value="ELECTRON TRANSFER FLAVOPROTEIN BETA SUBUNIT LYSINE METHYLTRANSFERASE"/>
    <property type="match status" value="1"/>
</dbReference>
<dbReference type="PANTHER" id="PTHR43648:SF1">
    <property type="entry name" value="ELECTRON TRANSFER FLAVOPROTEIN BETA SUBUNIT LYSINE METHYLTRANSFERASE"/>
    <property type="match status" value="1"/>
</dbReference>
<dbReference type="Pfam" id="PF06325">
    <property type="entry name" value="PrmA"/>
    <property type="match status" value="1"/>
</dbReference>
<dbReference type="PIRSF" id="PIRSF000401">
    <property type="entry name" value="RPL11_MTase"/>
    <property type="match status" value="1"/>
</dbReference>
<dbReference type="SUPFAM" id="SSF53335">
    <property type="entry name" value="S-adenosyl-L-methionine-dependent methyltransferases"/>
    <property type="match status" value="1"/>
</dbReference>
<comment type="function">
    <text evidence="1">Methylates ribosomal protein L11.</text>
</comment>
<comment type="catalytic activity">
    <reaction evidence="1">
        <text>L-lysyl-[protein] + 3 S-adenosyl-L-methionine = N(6),N(6),N(6)-trimethyl-L-lysyl-[protein] + 3 S-adenosyl-L-homocysteine + 3 H(+)</text>
        <dbReference type="Rhea" id="RHEA:54192"/>
        <dbReference type="Rhea" id="RHEA-COMP:9752"/>
        <dbReference type="Rhea" id="RHEA-COMP:13826"/>
        <dbReference type="ChEBI" id="CHEBI:15378"/>
        <dbReference type="ChEBI" id="CHEBI:29969"/>
        <dbReference type="ChEBI" id="CHEBI:57856"/>
        <dbReference type="ChEBI" id="CHEBI:59789"/>
        <dbReference type="ChEBI" id="CHEBI:61961"/>
    </reaction>
</comment>
<comment type="subcellular location">
    <subcellularLocation>
        <location evidence="1">Cytoplasm</location>
    </subcellularLocation>
</comment>
<comment type="similarity">
    <text evidence="1">Belongs to the methyltransferase superfamily. PrmA family.</text>
</comment>
<keyword id="KW-0963">Cytoplasm</keyword>
<keyword id="KW-0489">Methyltransferase</keyword>
<keyword id="KW-1185">Reference proteome</keyword>
<keyword id="KW-0949">S-adenosyl-L-methionine</keyword>
<keyword id="KW-0808">Transferase</keyword>